<comment type="function">
    <text evidence="1">Plays a major role in programmed cell death (PCD, apoptosis). egl-1 binds to and directly inhibits the activity of ced-9, releasing the cell death activator ced-4 from a ced-9/ced-4 containing protein complex and allowing ced-4 to induce caspase ced-3 autoproteolytic cleavage and activation. Also forms a holoenzyme with processed ced-3 enhancing ced-3 activity. Component of the egl-1, ced-9, ced-4 and ced-3 apoptotic signaling cascade required for the initiation of programmed cell death in cells fated to die during embryonic and postembryonic development. During oogenesis, required for germline apoptosis downstream of ced-9 and upstream of ced-3 but independently of egl-1. May regulate germline apoptosis in response to DNA damage, probably downstream of let-60/ras and mpk-1 pathway. Regulates CEP neuron apoptosis in response to high Al(3+) levels. During male tail morphogenesis, promotes apoptosis of the tail-spike cell. During larval development, required for the elimination of transient presynaptic components downstream of egl-1 and ced-9 and upstream of ced-3 apoptotic pathway. Together with ain-1, a component of the miRNA-induced-silencing complex (miRISC), and probably upstream of ced-3, regulates temporal cell fate patterning during larval development. May play a role in resistance to S.typhimurium-mediated infection.</text>
</comment>
<comment type="subunit">
    <text evidence="1">Associates as an asymmetric homodimer with ced-9. Upon release from ced-9, forms an octamer, known as the apoptosome, and interacts with ced-3; the interaction results in ced-3 autoproteolytic cleavage and activation. The octamer (a tetramer of an asymmetric dimer) also interacts with two processed ced-3 to form a stable holoenzyme. Interacts with sex-determining protein fem-1. May form a complex composed of ced-3, ced-4 and mac-1 or of ced-9, ced-4 and mac-1. Within the complex, interacts with ced-4.</text>
</comment>
<comment type="subcellular location">
    <subcellularLocation>
        <location evidence="1">Mitochondrion</location>
    </subcellularLocation>
    <subcellularLocation>
        <location evidence="1">Cytoplasm</location>
        <location evidence="1">Perinuclear region</location>
    </subcellularLocation>
    <text evidence="1">In non cell death induced cells, ced-9 is required for mitochondrial localization. Perinuclear in cell death induced cells.</text>
</comment>
<keyword id="KW-0053">Apoptosis</keyword>
<keyword id="KW-0067">ATP-binding</keyword>
<keyword id="KW-0963">Cytoplasm</keyword>
<keyword id="KW-0460">Magnesium</keyword>
<keyword id="KW-0479">Metal-binding</keyword>
<keyword id="KW-0496">Mitochondrion</keyword>
<keyword id="KW-0547">Nucleotide-binding</keyword>
<keyword id="KW-1185">Reference proteome</keyword>
<sequence length="569" mass="65244">MLCEIECRALNAAHTMLIQDFEPRDALTYLEGEKIFTEDHSDLISNMPTRLERIANFLRAYRRQASELAPLIDFFEYNNQNHLKDFLDEYLWFATHQPDKLRPVVLVPKFSRQMLDRKLLLGNVPKQMNCFSREFHVDRVIEKLDEMCDLESFFLFLHGRSGSGKSVIASQALSKSDQLIGINYDSVVWLKDSGTTPKATFDLFTDLLLMLKRARVVSDTDDSHNMPDFINRVLSRSEDDLLNFPSVEHVTSVVLKRMIANALIDRPNTLFVLDDVVQEDTIRWAQELRLRCLITTRDVEISNAASPECEFIEVTPLESYECFELLESYGMPVPAIERDEDILHKTIDLTSGNPAALMMIFKSCEPKTFEKMAQLNSKLETRGLSAIECITPYCYKSLSSSLQRCVEVLSDEDRSALAFAVIMPPGIDIPVKIWSCVIPVDICSNEEDQLDDEVADRLKRLSKRGALLSGKRSPVLTYKIDHVIHLFLKHVVDVQTIANGISILEQRLHELGNNNTPTPERHMPSKFRRTSAGDMFPKVEDSVIRPEDYSKFMQIHRTFYDSLKKFTSQ</sequence>
<accession>Q60Z52</accession>
<accession>A8XSP2</accession>
<gene>
    <name evidence="1" type="primary">ced-4</name>
    <name type="ORF">CBG17963</name>
</gene>
<feature type="chain" id="PRO_0000089469" description="Cell death protein 4">
    <location>
        <begin position="1"/>
        <end position="569"/>
    </location>
</feature>
<feature type="domain" description="CARD" evidence="3">
    <location>
        <begin position="1"/>
        <end position="91"/>
    </location>
</feature>
<feature type="domain" description="NB-ARC" evidence="2">
    <location>
        <begin position="116"/>
        <end position="442"/>
    </location>
</feature>
<feature type="binding site" evidence="1">
    <location>
        <position position="131"/>
    </location>
    <ligand>
        <name>ATP</name>
        <dbReference type="ChEBI" id="CHEBI:30616"/>
    </ligand>
</feature>
<feature type="binding site" evidence="1">
    <location>
        <begin position="162"/>
        <end position="167"/>
    </location>
    <ligand>
        <name>ATP</name>
        <dbReference type="ChEBI" id="CHEBI:30616"/>
    </ligand>
</feature>
<feature type="binding site" evidence="1">
    <location>
        <position position="166"/>
    </location>
    <ligand>
        <name>Mg(2+)</name>
        <dbReference type="ChEBI" id="CHEBI:18420"/>
    </ligand>
</feature>
<feature type="binding site" evidence="1">
    <location>
        <position position="171"/>
    </location>
    <ligand>
        <name>ATP</name>
        <dbReference type="ChEBI" id="CHEBI:30616"/>
    </ligand>
</feature>
<reference evidence="5" key="1">
    <citation type="journal article" date="2003" name="PLoS Biol.">
        <title>The genome sequence of Caenorhabditis briggsae: a platform for comparative genomics.</title>
        <authorList>
            <person name="Stein L.D."/>
            <person name="Bao Z."/>
            <person name="Blasiar D."/>
            <person name="Blumenthal T."/>
            <person name="Brent M.R."/>
            <person name="Chen N."/>
            <person name="Chinwalla A."/>
            <person name="Clarke L."/>
            <person name="Clee C."/>
            <person name="Coghlan A."/>
            <person name="Coulson A."/>
            <person name="D'Eustachio P."/>
            <person name="Fitch D.H.A."/>
            <person name="Fulton L.A."/>
            <person name="Fulton R.E."/>
            <person name="Griffiths-Jones S."/>
            <person name="Harris T.W."/>
            <person name="Hillier L.W."/>
            <person name="Kamath R."/>
            <person name="Kuwabara P.E."/>
            <person name="Mardis E.R."/>
            <person name="Marra M.A."/>
            <person name="Miner T.L."/>
            <person name="Minx P."/>
            <person name="Mullikin J.C."/>
            <person name="Plumb R.W."/>
            <person name="Rogers J."/>
            <person name="Schein J.E."/>
            <person name="Sohrmann M."/>
            <person name="Spieth J."/>
            <person name="Stajich J.E."/>
            <person name="Wei C."/>
            <person name="Willey D."/>
            <person name="Wilson R.K."/>
            <person name="Durbin R.M."/>
            <person name="Waterston R.H."/>
        </authorList>
    </citation>
    <scope>NUCLEOTIDE SEQUENCE [LARGE SCALE GENOMIC DNA]</scope>
    <source>
        <strain evidence="4">AF16</strain>
    </source>
</reference>
<dbReference type="EMBL" id="HE600963">
    <property type="protein sequence ID" value="CAP35494.3"/>
    <property type="molecule type" value="Genomic_DNA"/>
</dbReference>
<dbReference type="SMR" id="Q60Z52"/>
<dbReference type="FunCoup" id="Q60Z52">
    <property type="interactions" value="20"/>
</dbReference>
<dbReference type="STRING" id="6238.Q60Z52"/>
<dbReference type="EnsemblMetazoa" id="CBG17963a.1">
    <property type="protein sequence ID" value="CBG17963a.1"/>
    <property type="gene ID" value="WBGene00037464"/>
</dbReference>
<dbReference type="WormBase" id="CBG17963a">
    <property type="protein sequence ID" value="CBP37567"/>
    <property type="gene ID" value="WBGene00037464"/>
    <property type="gene designation" value="Cbr-ced-4"/>
</dbReference>
<dbReference type="eggNOG" id="KOG4658">
    <property type="taxonomic scope" value="Eukaryota"/>
</dbReference>
<dbReference type="HOGENOM" id="CLU_496380_0_0_1"/>
<dbReference type="InParanoid" id="Q60Z52"/>
<dbReference type="OMA" id="TDSCIFM"/>
<dbReference type="Proteomes" id="UP000008549">
    <property type="component" value="Unassembled WGS sequence"/>
</dbReference>
<dbReference type="GO" id="GO:0008303">
    <property type="term" value="C:caspase complex"/>
    <property type="evidence" value="ECO:0007669"/>
    <property type="project" value="EnsemblMetazoa"/>
</dbReference>
<dbReference type="GO" id="GO:0005829">
    <property type="term" value="C:cytosol"/>
    <property type="evidence" value="ECO:0000250"/>
    <property type="project" value="UniProtKB"/>
</dbReference>
<dbReference type="GO" id="GO:0016020">
    <property type="term" value="C:membrane"/>
    <property type="evidence" value="ECO:0007669"/>
    <property type="project" value="EnsemblMetazoa"/>
</dbReference>
<dbReference type="GO" id="GO:0005739">
    <property type="term" value="C:mitochondrion"/>
    <property type="evidence" value="ECO:0000250"/>
    <property type="project" value="UniProtKB"/>
</dbReference>
<dbReference type="GO" id="GO:0005634">
    <property type="term" value="C:nucleus"/>
    <property type="evidence" value="ECO:0000250"/>
    <property type="project" value="UniProtKB"/>
</dbReference>
<dbReference type="GO" id="GO:0048471">
    <property type="term" value="C:perinuclear region of cytoplasm"/>
    <property type="evidence" value="ECO:0007669"/>
    <property type="project" value="UniProtKB-SubCell"/>
</dbReference>
<dbReference type="GO" id="GO:0043531">
    <property type="term" value="F:ADP binding"/>
    <property type="evidence" value="ECO:0007669"/>
    <property type="project" value="InterPro"/>
</dbReference>
<dbReference type="GO" id="GO:0005524">
    <property type="term" value="F:ATP binding"/>
    <property type="evidence" value="ECO:0007669"/>
    <property type="project" value="UniProtKB-KW"/>
</dbReference>
<dbReference type="GO" id="GO:0051432">
    <property type="term" value="F:BH1 domain binding"/>
    <property type="evidence" value="ECO:0007669"/>
    <property type="project" value="EnsemblMetazoa"/>
</dbReference>
<dbReference type="GO" id="GO:0051434">
    <property type="term" value="F:BH3 domain binding"/>
    <property type="evidence" value="ECO:0007669"/>
    <property type="project" value="EnsemblMetazoa"/>
</dbReference>
<dbReference type="GO" id="GO:0089720">
    <property type="term" value="F:caspase binding"/>
    <property type="evidence" value="ECO:0007669"/>
    <property type="project" value="EnsemblMetazoa"/>
</dbReference>
<dbReference type="GO" id="GO:0140608">
    <property type="term" value="F:cysteine-type endopeptidase activator activity"/>
    <property type="evidence" value="ECO:0007669"/>
    <property type="project" value="EnsemblMetazoa"/>
</dbReference>
<dbReference type="GO" id="GO:0008656">
    <property type="term" value="F:cysteine-type endopeptidase activator activity involved in apoptotic process"/>
    <property type="evidence" value="ECO:0007669"/>
    <property type="project" value="EnsemblMetazoa"/>
</dbReference>
<dbReference type="GO" id="GO:0042802">
    <property type="term" value="F:identical protein binding"/>
    <property type="evidence" value="ECO:0007669"/>
    <property type="project" value="EnsemblMetazoa"/>
</dbReference>
<dbReference type="GO" id="GO:0000287">
    <property type="term" value="F:magnesium ion binding"/>
    <property type="evidence" value="ECO:0007669"/>
    <property type="project" value="EnsemblMetazoa"/>
</dbReference>
<dbReference type="GO" id="GO:0030042">
    <property type="term" value="P:actin filament depolymerization"/>
    <property type="evidence" value="ECO:0007669"/>
    <property type="project" value="EnsemblMetazoa"/>
</dbReference>
<dbReference type="GO" id="GO:0006915">
    <property type="term" value="P:apoptotic process"/>
    <property type="evidence" value="ECO:0000250"/>
    <property type="project" value="UniProtKB"/>
</dbReference>
<dbReference type="GO" id="GO:1902742">
    <property type="term" value="P:apoptotic process involved in development"/>
    <property type="evidence" value="ECO:0007669"/>
    <property type="project" value="EnsemblMetazoa"/>
</dbReference>
<dbReference type="GO" id="GO:0050829">
    <property type="term" value="P:defense response to Gram-negative bacterium"/>
    <property type="evidence" value="ECO:0007669"/>
    <property type="project" value="EnsemblMetazoa"/>
</dbReference>
<dbReference type="GO" id="GO:0009792">
    <property type="term" value="P:embryo development ending in birth or egg hatching"/>
    <property type="evidence" value="ECO:0007669"/>
    <property type="project" value="EnsemblMetazoa"/>
</dbReference>
<dbReference type="GO" id="GO:0048598">
    <property type="term" value="P:embryonic morphogenesis"/>
    <property type="evidence" value="ECO:0007669"/>
    <property type="project" value="EnsemblMetazoa"/>
</dbReference>
<dbReference type="GO" id="GO:0046716">
    <property type="term" value="P:muscle cell cellular homeostasis"/>
    <property type="evidence" value="ECO:0007669"/>
    <property type="project" value="EnsemblMetazoa"/>
</dbReference>
<dbReference type="GO" id="GO:0043066">
    <property type="term" value="P:negative regulation of apoptotic process"/>
    <property type="evidence" value="ECO:0000250"/>
    <property type="project" value="UniProtKB"/>
</dbReference>
<dbReference type="GO" id="GO:1900118">
    <property type="term" value="P:negative regulation of execution phase of apoptosis"/>
    <property type="evidence" value="ECO:0007669"/>
    <property type="project" value="EnsemblMetazoa"/>
</dbReference>
<dbReference type="GO" id="GO:0043065">
    <property type="term" value="P:positive regulation of apoptotic process"/>
    <property type="evidence" value="ECO:0000250"/>
    <property type="project" value="UniProtKB"/>
</dbReference>
<dbReference type="GO" id="GO:1904747">
    <property type="term" value="P:positive regulation of apoptotic process involved in development"/>
    <property type="evidence" value="ECO:0007669"/>
    <property type="project" value="EnsemblMetazoa"/>
</dbReference>
<dbReference type="GO" id="GO:0010954">
    <property type="term" value="P:positive regulation of protein processing"/>
    <property type="evidence" value="ECO:0007669"/>
    <property type="project" value="EnsemblMetazoa"/>
</dbReference>
<dbReference type="GO" id="GO:1905808">
    <property type="term" value="P:positive regulation of synapse pruning"/>
    <property type="evidence" value="ECO:0007669"/>
    <property type="project" value="EnsemblMetazoa"/>
</dbReference>
<dbReference type="GO" id="GO:0030155">
    <property type="term" value="P:regulation of cell adhesion"/>
    <property type="evidence" value="ECO:0007669"/>
    <property type="project" value="EnsemblMetazoa"/>
</dbReference>
<dbReference type="GO" id="GO:0008361">
    <property type="term" value="P:regulation of cell size"/>
    <property type="evidence" value="ECO:0007669"/>
    <property type="project" value="EnsemblMetazoa"/>
</dbReference>
<dbReference type="GO" id="GO:0040034">
    <property type="term" value="P:regulation of development, heterochronic"/>
    <property type="evidence" value="ECO:0007669"/>
    <property type="project" value="EnsemblMetazoa"/>
</dbReference>
<dbReference type="GO" id="GO:0031647">
    <property type="term" value="P:regulation of protein stability"/>
    <property type="evidence" value="ECO:0007669"/>
    <property type="project" value="EnsemblMetazoa"/>
</dbReference>
<dbReference type="FunFam" id="1.10.10.10:FF:001358">
    <property type="entry name" value="Cell death protein 4"/>
    <property type="match status" value="1"/>
</dbReference>
<dbReference type="FunFam" id="3.40.50.300:FF:003677">
    <property type="entry name" value="Cell death protein 4"/>
    <property type="match status" value="1"/>
</dbReference>
<dbReference type="Gene3D" id="1.10.8.490">
    <property type="entry name" value="Ced-4 linker helical domain-like"/>
    <property type="match status" value="1"/>
</dbReference>
<dbReference type="Gene3D" id="1.10.533.10">
    <property type="entry name" value="Death Domain, Fas"/>
    <property type="match status" value="1"/>
</dbReference>
<dbReference type="Gene3D" id="3.40.50.300">
    <property type="entry name" value="P-loop containing nucleotide triphosphate hydrolases"/>
    <property type="match status" value="1"/>
</dbReference>
<dbReference type="Gene3D" id="1.10.10.10">
    <property type="entry name" value="Winged helix-like DNA-binding domain superfamily/Winged helix DNA-binding domain"/>
    <property type="match status" value="1"/>
</dbReference>
<dbReference type="InterPro" id="IPR001315">
    <property type="entry name" value="CARD"/>
</dbReference>
<dbReference type="InterPro" id="IPR016854">
    <property type="entry name" value="Ced-4"/>
</dbReference>
<dbReference type="InterPro" id="IPR054317">
    <property type="entry name" value="CED4_WHD"/>
</dbReference>
<dbReference type="InterPro" id="IPR011029">
    <property type="entry name" value="DEATH-like_dom_sf"/>
</dbReference>
<dbReference type="InterPro" id="IPR002182">
    <property type="entry name" value="NB-ARC"/>
</dbReference>
<dbReference type="InterPro" id="IPR027417">
    <property type="entry name" value="P-loop_NTPase"/>
</dbReference>
<dbReference type="InterPro" id="IPR036388">
    <property type="entry name" value="WH-like_DNA-bd_sf"/>
</dbReference>
<dbReference type="InterPro" id="IPR036390">
    <property type="entry name" value="WH_DNA-bd_sf"/>
</dbReference>
<dbReference type="PANTHER" id="PTHR22845">
    <property type="entry name" value="APOPTOTIC PROTEASE-ACTIVATING FACTOR 1"/>
    <property type="match status" value="1"/>
</dbReference>
<dbReference type="PANTHER" id="PTHR22845:SF5">
    <property type="entry name" value="APOPTOTIC PROTEASE-ACTIVATING FACTOR 1"/>
    <property type="match status" value="1"/>
</dbReference>
<dbReference type="Pfam" id="PF00619">
    <property type="entry name" value="CARD"/>
    <property type="match status" value="1"/>
</dbReference>
<dbReference type="Pfam" id="PF22094">
    <property type="entry name" value="CED4_WHD"/>
    <property type="match status" value="1"/>
</dbReference>
<dbReference type="Pfam" id="PF00931">
    <property type="entry name" value="NB-ARC"/>
    <property type="match status" value="1"/>
</dbReference>
<dbReference type="PIRSF" id="PIRSF027202">
    <property type="entry name" value="Apop_reg_Ced-4"/>
    <property type="match status" value="1"/>
</dbReference>
<dbReference type="SMART" id="SM00114">
    <property type="entry name" value="CARD"/>
    <property type="match status" value="1"/>
</dbReference>
<dbReference type="SUPFAM" id="SSF47986">
    <property type="entry name" value="DEATH domain"/>
    <property type="match status" value="1"/>
</dbReference>
<dbReference type="SUPFAM" id="SSF52540">
    <property type="entry name" value="P-loop containing nucleoside triphosphate hydrolases"/>
    <property type="match status" value="1"/>
</dbReference>
<dbReference type="SUPFAM" id="SSF46785">
    <property type="entry name" value="Winged helix' DNA-binding domain"/>
    <property type="match status" value="1"/>
</dbReference>
<protein>
    <recommendedName>
        <fullName>Cell death protein 4</fullName>
    </recommendedName>
</protein>
<organism>
    <name type="scientific">Caenorhabditis briggsae</name>
    <dbReference type="NCBI Taxonomy" id="6238"/>
    <lineage>
        <taxon>Eukaryota</taxon>
        <taxon>Metazoa</taxon>
        <taxon>Ecdysozoa</taxon>
        <taxon>Nematoda</taxon>
        <taxon>Chromadorea</taxon>
        <taxon>Rhabditida</taxon>
        <taxon>Rhabditina</taxon>
        <taxon>Rhabditomorpha</taxon>
        <taxon>Rhabditoidea</taxon>
        <taxon>Rhabditidae</taxon>
        <taxon>Peloderinae</taxon>
        <taxon>Caenorhabditis</taxon>
    </lineage>
</organism>
<proteinExistence type="inferred from homology"/>
<name>CED4_CAEBR</name>
<evidence type="ECO:0000250" key="1">
    <source>
        <dbReference type="UniProtKB" id="P30429"/>
    </source>
</evidence>
<evidence type="ECO:0000255" key="2"/>
<evidence type="ECO:0000255" key="3">
    <source>
        <dbReference type="PROSITE-ProRule" id="PRU00046"/>
    </source>
</evidence>
<evidence type="ECO:0000269" key="4">
    <source>
    </source>
</evidence>
<evidence type="ECO:0000305" key="5"/>